<comment type="function">
    <text>Actins are highly conserved proteins that are involved in various types of cell motility and are ubiquitously expressed in all eukaryotic cells.</text>
</comment>
<comment type="function">
    <text>Multiple isoforms are involved in various cellular functions such as cytoskeleton structure, cell mobility, chromosome movement and muscle contraction.</text>
</comment>
<comment type="catalytic activity">
    <reaction evidence="3">
        <text>ATP + H2O = ADP + phosphate + H(+)</text>
        <dbReference type="Rhea" id="RHEA:13065"/>
        <dbReference type="ChEBI" id="CHEBI:15377"/>
        <dbReference type="ChEBI" id="CHEBI:15378"/>
        <dbReference type="ChEBI" id="CHEBI:30616"/>
        <dbReference type="ChEBI" id="CHEBI:43474"/>
        <dbReference type="ChEBI" id="CHEBI:456216"/>
    </reaction>
</comment>
<comment type="subcellular location">
    <subcellularLocation>
        <location>Cytoplasm</location>
        <location>Cytoskeleton</location>
    </subcellularLocation>
</comment>
<comment type="PTM">
    <text evidence="1">Oxidation of Met-45 to form methionine sulfoxide promotes actin filament depolymerization. Methionine sulfoxide is produced stereospecifically, but it is not known whether the (S)-S-oxide or the (R)-S-oxide is produced (By similarity).</text>
</comment>
<comment type="similarity">
    <text evidence="4">Belongs to the actin family.</text>
</comment>
<keyword id="KW-0007">Acetylation</keyword>
<keyword id="KW-0067">ATP-binding</keyword>
<keyword id="KW-0963">Cytoplasm</keyword>
<keyword id="KW-0206">Cytoskeleton</keyword>
<keyword id="KW-0378">Hydrolase</keyword>
<keyword id="KW-0488">Methylation</keyword>
<keyword id="KW-0514">Muscle protein</keyword>
<keyword id="KW-0547">Nucleotide-binding</keyword>
<keyword id="KW-0558">Oxidation</keyword>
<keyword id="KW-1185">Reference proteome</keyword>
<name>ACT1_BACDO</name>
<organism>
    <name type="scientific">Bactrocera dorsalis</name>
    <name type="common">Oriental fruit fly</name>
    <name type="synonym">Dacus dorsalis</name>
    <dbReference type="NCBI Taxonomy" id="27457"/>
    <lineage>
        <taxon>Eukaryota</taxon>
        <taxon>Metazoa</taxon>
        <taxon>Ecdysozoa</taxon>
        <taxon>Arthropoda</taxon>
        <taxon>Hexapoda</taxon>
        <taxon>Insecta</taxon>
        <taxon>Pterygota</taxon>
        <taxon>Neoptera</taxon>
        <taxon>Endopterygota</taxon>
        <taxon>Diptera</taxon>
        <taxon>Brachycera</taxon>
        <taxon>Muscomorpha</taxon>
        <taxon>Tephritoidea</taxon>
        <taxon>Tephritidae</taxon>
        <taxon>Bactrocera</taxon>
        <taxon>Bactrocera</taxon>
    </lineage>
</organism>
<feature type="propeptide" id="PRO_0000000666" description="Removed in mature form" evidence="1">
    <location>
        <begin position="1"/>
        <end position="2"/>
    </location>
</feature>
<feature type="chain" id="PRO_0000000667" description="Actin, indirect flight muscle">
    <location>
        <begin position="3"/>
        <end position="376"/>
    </location>
</feature>
<feature type="modified residue" description="N-acetylaspartate" evidence="1">
    <location>
        <position position="3"/>
    </location>
</feature>
<feature type="modified residue" description="Methionine sulfoxide" evidence="1">
    <location>
        <position position="45"/>
    </location>
</feature>
<feature type="modified residue" description="Methionine sulfoxide" evidence="1">
    <location>
        <position position="48"/>
    </location>
</feature>
<feature type="modified residue" description="Tele-methylhistidine" evidence="2">
    <location>
        <position position="74"/>
    </location>
</feature>
<reference key="1">
    <citation type="journal article" date="1994" name="Insect Biochem. Mol. Biol.">
        <title>The actin gene family in the oriental fruit fly Bactrocera dorsalis. Muscle specific actins.</title>
        <authorList>
            <person name="He M."/>
            <person name="Haymer D.S."/>
        </authorList>
    </citation>
    <scope>NUCLEOTIDE SEQUENCE [GENOMIC DNA]</scope>
    <source>
        <strain>Puna</strain>
    </source>
</reference>
<dbReference type="EC" id="3.6.4.-" evidence="3"/>
<dbReference type="EMBL" id="L12253">
    <property type="protein sequence ID" value="AAA62341.1"/>
    <property type="molecule type" value="Genomic_DNA"/>
</dbReference>
<dbReference type="RefSeq" id="XP_011208262.1">
    <property type="nucleotide sequence ID" value="XM_011209960.3"/>
</dbReference>
<dbReference type="SMR" id="P83969"/>
<dbReference type="FunCoup" id="P83969">
    <property type="interactions" value="10"/>
</dbReference>
<dbReference type="EnsemblMetazoa" id="XM_011209960.2">
    <property type="protein sequence ID" value="XP_011208262.1"/>
    <property type="gene ID" value="LOC105229580"/>
</dbReference>
<dbReference type="GeneID" id="105229580"/>
<dbReference type="KEGG" id="bdr:105229580"/>
<dbReference type="InParanoid" id="P83969"/>
<dbReference type="OMA" id="WIWAGRD"/>
<dbReference type="OrthoDB" id="422673at2759"/>
<dbReference type="Proteomes" id="UP000504616">
    <property type="component" value="Unplaced"/>
</dbReference>
<dbReference type="GO" id="GO:0005737">
    <property type="term" value="C:cytoplasm"/>
    <property type="evidence" value="ECO:0007669"/>
    <property type="project" value="UniProtKB-KW"/>
</dbReference>
<dbReference type="GO" id="GO:0005856">
    <property type="term" value="C:cytoskeleton"/>
    <property type="evidence" value="ECO:0007669"/>
    <property type="project" value="UniProtKB-SubCell"/>
</dbReference>
<dbReference type="GO" id="GO:0005524">
    <property type="term" value="F:ATP binding"/>
    <property type="evidence" value="ECO:0007669"/>
    <property type="project" value="UniProtKB-KW"/>
</dbReference>
<dbReference type="GO" id="GO:0016787">
    <property type="term" value="F:hydrolase activity"/>
    <property type="evidence" value="ECO:0007669"/>
    <property type="project" value="UniProtKB-KW"/>
</dbReference>
<dbReference type="CDD" id="cd10224">
    <property type="entry name" value="ASKHA_NBD_actin"/>
    <property type="match status" value="1"/>
</dbReference>
<dbReference type="FunFam" id="2.30.36.70:FF:000001">
    <property type="entry name" value="Actin, alpha skeletal muscle"/>
    <property type="match status" value="1"/>
</dbReference>
<dbReference type="FunFam" id="3.30.420.40:FF:000131">
    <property type="entry name" value="Actin, alpha skeletal muscle"/>
    <property type="match status" value="1"/>
</dbReference>
<dbReference type="FunFam" id="3.30.420.40:FF:000291">
    <property type="entry name" value="Actin, alpha skeletal muscle"/>
    <property type="match status" value="1"/>
</dbReference>
<dbReference type="FunFam" id="3.90.640.10:FF:000047">
    <property type="entry name" value="Actin, alpha skeletal muscle"/>
    <property type="match status" value="1"/>
</dbReference>
<dbReference type="FunFam" id="3.30.420.40:FF:000058">
    <property type="entry name" value="Putative actin-related protein 5"/>
    <property type="match status" value="1"/>
</dbReference>
<dbReference type="Gene3D" id="3.30.420.40">
    <property type="match status" value="2"/>
</dbReference>
<dbReference type="Gene3D" id="3.90.640.10">
    <property type="entry name" value="Actin, Chain A, domain 4"/>
    <property type="match status" value="1"/>
</dbReference>
<dbReference type="InterPro" id="IPR004000">
    <property type="entry name" value="Actin"/>
</dbReference>
<dbReference type="InterPro" id="IPR020902">
    <property type="entry name" value="Actin/actin-like_CS"/>
</dbReference>
<dbReference type="InterPro" id="IPR004001">
    <property type="entry name" value="Actin_CS"/>
</dbReference>
<dbReference type="InterPro" id="IPR043129">
    <property type="entry name" value="ATPase_NBD"/>
</dbReference>
<dbReference type="PANTHER" id="PTHR11937">
    <property type="entry name" value="ACTIN"/>
    <property type="match status" value="1"/>
</dbReference>
<dbReference type="Pfam" id="PF00022">
    <property type="entry name" value="Actin"/>
    <property type="match status" value="1"/>
</dbReference>
<dbReference type="PRINTS" id="PR00190">
    <property type="entry name" value="ACTIN"/>
</dbReference>
<dbReference type="SMART" id="SM00268">
    <property type="entry name" value="ACTIN"/>
    <property type="match status" value="1"/>
</dbReference>
<dbReference type="SUPFAM" id="SSF53067">
    <property type="entry name" value="Actin-like ATPase domain"/>
    <property type="match status" value="2"/>
</dbReference>
<dbReference type="PROSITE" id="PS00406">
    <property type="entry name" value="ACTINS_1"/>
    <property type="match status" value="1"/>
</dbReference>
<dbReference type="PROSITE" id="PS00432">
    <property type="entry name" value="ACTINS_2"/>
    <property type="match status" value="1"/>
</dbReference>
<dbReference type="PROSITE" id="PS01132">
    <property type="entry name" value="ACTINS_ACT_LIKE"/>
    <property type="match status" value="1"/>
</dbReference>
<evidence type="ECO:0000250" key="1"/>
<evidence type="ECO:0000250" key="2">
    <source>
        <dbReference type="UniProtKB" id="P02572"/>
    </source>
</evidence>
<evidence type="ECO:0000250" key="3">
    <source>
        <dbReference type="UniProtKB" id="P68137"/>
    </source>
</evidence>
<evidence type="ECO:0000305" key="4"/>
<proteinExistence type="inferred from homology"/>
<protein>
    <recommendedName>
        <fullName>Actin, indirect flight muscle</fullName>
        <ecNumber evidence="3">3.6.4.-</ecNumber>
    </recommendedName>
</protein>
<accession>P83969</accession>
<accession>P02575</accession>
<accession>P45893</accession>
<accession>Q9VF62</accession>
<sequence length="376" mass="41700">MCDDDAGALVIDNGSGMCKAGFAGDDAPRAVFPSIVGRPRHQGVMVGMGQKDSYVGDEAQSKRGILTLKYPIEHGIITNWDDMEKIWHHTFYNELRVAPEEHPVLLTEAPLNPKANREKMTQIMFETFNSPAMYVAIQAVLSLYASGRTTGIVLDSGDGVSHTVPIYEGFALPHAILRLDLAGRDLTDYLMKILTERGYSFTTTAEREIVRDIKEKLCYVALDFEQEMATAAASTSLEKSYELPDGQVITIGNERFRCPEALFQPSFLGMESCGIHETVYNSIMKCDVDIRKDLYANSVLSGGTTMYPGIADRMQKEITALAPSTIKIKIIAPPERKYSVWIGGSILASLSTFQQMWISKQEYDESGPGIVHRKCF</sequence>